<dbReference type="EMBL" id="BX284602">
    <property type="protein sequence ID" value="CCD65263.2"/>
    <property type="molecule type" value="Genomic_DNA"/>
</dbReference>
<dbReference type="EMBL" id="BX284602">
    <property type="protein sequence ID" value="SOF58735.1"/>
    <property type="molecule type" value="Genomic_DNA"/>
</dbReference>
<dbReference type="EMBL" id="BX284602">
    <property type="protein sequence ID" value="SOF58736.1"/>
    <property type="molecule type" value="Genomic_DNA"/>
</dbReference>
<dbReference type="EMBL" id="BX284602">
    <property type="protein sequence ID" value="SOF58737.1"/>
    <property type="molecule type" value="Genomic_DNA"/>
</dbReference>
<dbReference type="EMBL" id="BX284602">
    <property type="protein sequence ID" value="SOF58738.1"/>
    <property type="molecule type" value="Genomic_DNA"/>
</dbReference>
<dbReference type="PIR" id="B88188">
    <property type="entry name" value="B88188"/>
</dbReference>
<dbReference type="RefSeq" id="NP_001343744.1">
    <molecule id="Q09237-3"/>
    <property type="nucleotide sequence ID" value="NM_001356865.3"/>
</dbReference>
<dbReference type="RefSeq" id="NP_001343745.1">
    <molecule id="Q09237-4"/>
    <property type="nucleotide sequence ID" value="NM_001356866.2"/>
</dbReference>
<dbReference type="RefSeq" id="NP_001343746.1">
    <molecule id="Q09237-1"/>
    <property type="nucleotide sequence ID" value="NM_001356864.3"/>
</dbReference>
<dbReference type="RefSeq" id="NP_001343747.1">
    <molecule id="Q09237-5"/>
    <property type="nucleotide sequence ID" value="NM_001356867.3"/>
</dbReference>
<dbReference type="RefSeq" id="NP_495360.2">
    <molecule id="Q09237-2"/>
    <property type="nucleotide sequence ID" value="NM_062959.3"/>
</dbReference>
<dbReference type="SMR" id="Q09237"/>
<dbReference type="BioGRID" id="39441">
    <property type="interactions" value="6"/>
</dbReference>
<dbReference type="FunCoup" id="Q09237">
    <property type="interactions" value="210"/>
</dbReference>
<dbReference type="STRING" id="6239.C18H9.3d.1"/>
<dbReference type="PaxDb" id="6239-C18H9.3"/>
<dbReference type="PeptideAtlas" id="Q09237"/>
<dbReference type="EnsemblMetazoa" id="C18H9.3a.1">
    <molecule id="Q09237-2"/>
    <property type="protein sequence ID" value="C18H9.3a.1"/>
    <property type="gene ID" value="WBGene00016002"/>
</dbReference>
<dbReference type="EnsemblMetazoa" id="C18H9.3b.1">
    <molecule id="Q09237-3"/>
    <property type="protein sequence ID" value="C18H9.3b.1"/>
    <property type="gene ID" value="WBGene00016002"/>
</dbReference>
<dbReference type="EnsemblMetazoa" id="C18H9.3c.1">
    <molecule id="Q09237-4"/>
    <property type="protein sequence ID" value="C18H9.3c.1"/>
    <property type="gene ID" value="WBGene00016002"/>
</dbReference>
<dbReference type="EnsemblMetazoa" id="C18H9.3d.1">
    <molecule id="Q09237-1"/>
    <property type="protein sequence ID" value="C18H9.3d.1"/>
    <property type="gene ID" value="WBGene00016002"/>
</dbReference>
<dbReference type="EnsemblMetazoa" id="C18H9.3e.1">
    <molecule id="Q09237-5"/>
    <property type="protein sequence ID" value="C18H9.3e.1"/>
    <property type="gene ID" value="WBGene00016002"/>
</dbReference>
<dbReference type="GeneID" id="174103"/>
<dbReference type="KEGG" id="cel:CELE_C18H9.3"/>
<dbReference type="UCSC" id="C18H9.2">
    <molecule id="Q09237-1"/>
    <property type="organism name" value="c. elegans"/>
</dbReference>
<dbReference type="UCSC" id="C18H9.3">
    <property type="organism name" value="c. elegans"/>
</dbReference>
<dbReference type="AGR" id="WB:WBGene00016002"/>
<dbReference type="CTD" id="174103"/>
<dbReference type="WormBase" id="C18H9.3a">
    <molecule id="Q09237-2"/>
    <property type="protein sequence ID" value="CE47928"/>
    <property type="gene ID" value="WBGene00016002"/>
    <property type="gene designation" value="gyf-1"/>
</dbReference>
<dbReference type="WormBase" id="C18H9.3b">
    <molecule id="Q09237-3"/>
    <property type="protein sequence ID" value="CE52358"/>
    <property type="gene ID" value="WBGene00016002"/>
    <property type="gene designation" value="gyf-1"/>
</dbReference>
<dbReference type="WormBase" id="C18H9.3c">
    <molecule id="Q09237-4"/>
    <property type="protein sequence ID" value="CE52279"/>
    <property type="gene ID" value="WBGene00016002"/>
    <property type="gene designation" value="gyf-1"/>
</dbReference>
<dbReference type="WormBase" id="C18H9.3d">
    <molecule id="Q09237-1"/>
    <property type="protein sequence ID" value="CE52212"/>
    <property type="gene ID" value="WBGene00016002"/>
    <property type="gene designation" value="gyf-1"/>
</dbReference>
<dbReference type="WormBase" id="C18H9.3e">
    <molecule id="Q09237-5"/>
    <property type="protein sequence ID" value="CE43752"/>
    <property type="gene ID" value="WBGene00016002"/>
    <property type="gene designation" value="gyf-1"/>
</dbReference>
<dbReference type="eggNOG" id="KOG1862">
    <property type="taxonomic scope" value="Eukaryota"/>
</dbReference>
<dbReference type="GeneTree" id="ENSGT00940000168947"/>
<dbReference type="HOGENOM" id="CLU_285799_0_0_1"/>
<dbReference type="InParanoid" id="Q09237"/>
<dbReference type="OMA" id="WMEDGED"/>
<dbReference type="OrthoDB" id="48509at2759"/>
<dbReference type="PRO" id="PR:Q09237"/>
<dbReference type="Proteomes" id="UP000001940">
    <property type="component" value="Chromosome II"/>
</dbReference>
<dbReference type="Bgee" id="WBGene00016002">
    <property type="expression patterns" value="Expressed in adult organism and 3 other cell types or tissues"/>
</dbReference>
<dbReference type="GO" id="GO:0005829">
    <property type="term" value="C:cytosol"/>
    <property type="evidence" value="ECO:0000318"/>
    <property type="project" value="GO_Central"/>
</dbReference>
<dbReference type="CDD" id="cd06503">
    <property type="entry name" value="ATP-synt_Fo_b"/>
    <property type="match status" value="1"/>
</dbReference>
<dbReference type="CDD" id="cd00072">
    <property type="entry name" value="GYF"/>
    <property type="match status" value="1"/>
</dbReference>
<dbReference type="Gene3D" id="3.30.1490.40">
    <property type="match status" value="1"/>
</dbReference>
<dbReference type="InterPro" id="IPR051640">
    <property type="entry name" value="GRB10-interact_GYF"/>
</dbReference>
<dbReference type="InterPro" id="IPR003169">
    <property type="entry name" value="GYF"/>
</dbReference>
<dbReference type="InterPro" id="IPR035445">
    <property type="entry name" value="GYF-like_dom_sf"/>
</dbReference>
<dbReference type="PANTHER" id="PTHR14445:SF36">
    <property type="entry name" value="FI03272P-RELATED"/>
    <property type="match status" value="1"/>
</dbReference>
<dbReference type="PANTHER" id="PTHR14445">
    <property type="entry name" value="GRB10 INTERACTING GYF PROTEIN"/>
    <property type="match status" value="1"/>
</dbReference>
<dbReference type="Pfam" id="PF02213">
    <property type="entry name" value="GYF"/>
    <property type="match status" value="1"/>
</dbReference>
<dbReference type="SMART" id="SM00444">
    <property type="entry name" value="GYF"/>
    <property type="match status" value="1"/>
</dbReference>
<dbReference type="SUPFAM" id="SSF55277">
    <property type="entry name" value="GYF domain"/>
    <property type="match status" value="1"/>
</dbReference>
<dbReference type="PROSITE" id="PS50829">
    <property type="entry name" value="GYF"/>
    <property type="match status" value="1"/>
</dbReference>
<organism>
    <name type="scientific">Caenorhabditis elegans</name>
    <dbReference type="NCBI Taxonomy" id="6239"/>
    <lineage>
        <taxon>Eukaryota</taxon>
        <taxon>Metazoa</taxon>
        <taxon>Ecdysozoa</taxon>
        <taxon>Nematoda</taxon>
        <taxon>Chromadorea</taxon>
        <taxon>Rhabditida</taxon>
        <taxon>Rhabditina</taxon>
        <taxon>Rhabditomorpha</taxon>
        <taxon>Rhabditoidea</taxon>
        <taxon>Rhabditidae</taxon>
        <taxon>Peloderinae</taxon>
        <taxon>Caenorhabditis</taxon>
    </lineage>
</organism>
<comment type="alternative products">
    <event type="alternative splicing"/>
    <isoform>
        <id>Q09237-1</id>
        <name evidence="8">d</name>
        <sequence type="displayed"/>
    </isoform>
    <isoform>
        <id>Q09237-2</id>
        <name evidence="5">a</name>
        <sequence type="described" ref="VSP_060467 VSP_060468"/>
    </isoform>
    <isoform>
        <id>Q09237-3</id>
        <name evidence="6">b</name>
        <sequence type="described" ref="VSP_060468"/>
    </isoform>
    <isoform>
        <id>Q09237-4</id>
        <name evidence="7">c</name>
        <sequence type="described" ref="VSP_060467"/>
    </isoform>
    <isoform>
        <id>Q09237-5</id>
        <name evidence="9">e</name>
        <sequence type="described" ref="VSP_060466"/>
    </isoform>
</comment>
<gene>
    <name evidence="8" type="primary">gyf-1</name>
    <name evidence="8" type="ORF">C18H9.3</name>
</gene>
<sequence>MSSVSSAEPTAQQNFNPSCHFRMRPNAANRGGSISSGNNRSSGFGGGGFDDGGDEISSSAIAAAAAAVLSSPVVSEFSYTRERLLELAPTGSIMPDALRDQLFFNEKNLPLVSNTPLSEHEQKLQHNINSSKAMSLLSHADRASIAAGAAYGSGYGAASGALQNGQSPTSRWAPKSSWNKGTPDRGTGTTPRGGGSVGRASGAFFAGRGGGRIGGENGFGGATNGGSPAAQNEDSPGTYQSKFNALRRGGGAGSVGRGGSTTGSAFNTRADALYNPNDPTDRPKAVNPAATRSESDEEEEEGWSKVGSTSRTSTNAAPQSSERPAWARSESWIQRTQQQQQQQQQQSTQQQAQPPITLWNNREVGSDSTVWKDRNHMVAAVRKASTENHPPQQQQQQQQRSSAPVSAPSRQESESTDVPNLPIPTYPSDPSAWSNNSMGGGIFYQPTPQPPAPIVKEEPVQFYYMDPTETRRGPFPKDQMNVWFKAGYFTDESLRVQRGENGEYKTIGDLKKLHGSSTPFEYLEDIEPPRPILPSIPYPSATNPLYPAAFGGVNMWSSMGQPTDVYMMQTNFEQQLVAERNRLLDDHNRRLAEEAEKMAKFQEAMYRQLTMQHEQRVREQELLLQKRAEEIEKREAESKREEAARLQKLEQEAREIEERKAALEAEDRRKREIEEYNRMCEKKKNEIIAKEAADRMRLEEATERERRRLEAESRVAEEKIRRDRVRAELEAREREEERKRAAERERIARETASLQQQAELDAAWAGKKIATVTTSNSAFTGAPKQVSPSGSEESDEWISTSKEVKHTKTAPWAAKVEAPQKSEKTLLEIQKEEERKFKVEQEKNAKLKAKEQASNITSAAAIAGDKSGGLWGASKTWAAPESNSSKSYVSPFLDGPSLEAANKMALQKKNSQPKIAVPAKSAPTSAKVATPVKAKATAVAVSSPATNQKTKKTKEQVATDELQQWFVKRFQQFSTQVDSSTLFDCIMSLENPNEVEDIVMSYLDESKTVKEFVREFIKRRIAMRAAGGRPDADDLTSARTAAAAPSDSNSGSNSNSGNGQGKKKKKTQKQVLDGNILGFRGTAAADRLNKGEIDAVPSAPVNPSRR</sequence>
<reference key="1">
    <citation type="journal article" date="1998" name="Science">
        <title>Genome sequence of the nematode C. elegans: a platform for investigating biology.</title>
        <authorList>
            <consortium name="The C. elegans sequencing consortium"/>
        </authorList>
    </citation>
    <scope>NUCLEOTIDE SEQUENCE [LARGE SCALE GENOMIC DNA]</scope>
    <source>
        <strain>Bristol N2</strain>
    </source>
</reference>
<protein>
    <recommendedName>
        <fullName evidence="4">GYF domain-containing protein gyf-1</fullName>
    </recommendedName>
</protein>
<proteinExistence type="predicted"/>
<evidence type="ECO:0000255" key="1"/>
<evidence type="ECO:0000255" key="2">
    <source>
        <dbReference type="PROSITE-ProRule" id="PRU00101"/>
    </source>
</evidence>
<evidence type="ECO:0000256" key="3">
    <source>
        <dbReference type="SAM" id="MobiDB-lite"/>
    </source>
</evidence>
<evidence type="ECO:0000305" key="4"/>
<evidence type="ECO:0000312" key="5">
    <source>
        <dbReference type="WormBase" id="C18H9.3a"/>
    </source>
</evidence>
<evidence type="ECO:0000312" key="6">
    <source>
        <dbReference type="WormBase" id="C18H9.3b"/>
    </source>
</evidence>
<evidence type="ECO:0000312" key="7">
    <source>
        <dbReference type="WormBase" id="C18H9.3c"/>
    </source>
</evidence>
<evidence type="ECO:0000312" key="8">
    <source>
        <dbReference type="WormBase" id="C18H9.3d"/>
    </source>
</evidence>
<evidence type="ECO:0000312" key="9">
    <source>
        <dbReference type="WormBase" id="C18H9.3e"/>
    </source>
</evidence>
<name>GYF1_CAEEL</name>
<keyword id="KW-0025">Alternative splicing</keyword>
<keyword id="KW-0175">Coiled coil</keyword>
<keyword id="KW-1185">Reference proteome</keyword>
<feature type="chain" id="PRO_0000065188" description="GYF domain-containing protein gyf-1">
    <location>
        <begin position="1"/>
        <end position="1106"/>
    </location>
</feature>
<feature type="domain" description="GYF" evidence="2">
    <location>
        <begin position="459"/>
        <end position="508"/>
    </location>
</feature>
<feature type="region of interest" description="Disordered" evidence="3">
    <location>
        <begin position="1"/>
        <end position="50"/>
    </location>
</feature>
<feature type="region of interest" description="Disordered" evidence="3">
    <location>
        <begin position="160"/>
        <end position="370"/>
    </location>
</feature>
<feature type="region of interest" description="Disordered" evidence="3">
    <location>
        <begin position="383"/>
        <end position="434"/>
    </location>
</feature>
<feature type="region of interest" description="Disordered" evidence="3">
    <location>
        <begin position="778"/>
        <end position="811"/>
    </location>
</feature>
<feature type="region of interest" description="Disordered" evidence="3">
    <location>
        <begin position="909"/>
        <end position="928"/>
    </location>
</feature>
<feature type="region of interest" description="Disordered" evidence="3">
    <location>
        <begin position="1026"/>
        <end position="1076"/>
    </location>
</feature>
<feature type="region of interest" description="Disordered" evidence="3">
    <location>
        <begin position="1087"/>
        <end position="1106"/>
    </location>
</feature>
<feature type="coiled-coil region" evidence="1">
    <location>
        <begin position="584"/>
        <end position="746"/>
    </location>
</feature>
<feature type="compositionally biased region" description="Polar residues" evidence="3">
    <location>
        <begin position="1"/>
        <end position="17"/>
    </location>
</feature>
<feature type="compositionally biased region" description="Low complexity" evidence="3">
    <location>
        <begin position="30"/>
        <end position="42"/>
    </location>
</feature>
<feature type="compositionally biased region" description="Polar residues" evidence="3">
    <location>
        <begin position="162"/>
        <end position="180"/>
    </location>
</feature>
<feature type="compositionally biased region" description="Gly residues" evidence="3">
    <location>
        <begin position="207"/>
        <end position="224"/>
    </location>
</feature>
<feature type="compositionally biased region" description="Polar residues" evidence="3">
    <location>
        <begin position="229"/>
        <end position="243"/>
    </location>
</feature>
<feature type="compositionally biased region" description="Gly residues" evidence="3">
    <location>
        <begin position="248"/>
        <end position="261"/>
    </location>
</feature>
<feature type="compositionally biased region" description="Polar residues" evidence="3">
    <location>
        <begin position="306"/>
        <end position="322"/>
    </location>
</feature>
<feature type="compositionally biased region" description="Low complexity" evidence="3">
    <location>
        <begin position="334"/>
        <end position="353"/>
    </location>
</feature>
<feature type="compositionally biased region" description="Low complexity" evidence="3">
    <location>
        <begin position="390"/>
        <end position="410"/>
    </location>
</feature>
<feature type="compositionally biased region" description="Polar residues" evidence="3">
    <location>
        <begin position="786"/>
        <end position="801"/>
    </location>
</feature>
<feature type="compositionally biased region" description="Low complexity" evidence="3">
    <location>
        <begin position="1046"/>
        <end position="1057"/>
    </location>
</feature>
<feature type="splice variant" id="VSP_060466" description="In isoform e." evidence="4">
    <location>
        <begin position="1"/>
        <end position="999"/>
    </location>
</feature>
<feature type="splice variant" id="VSP_060467" description="In isoform a and isoform c." evidence="4">
    <original>CHFR</original>
    <variation>W</variation>
    <location>
        <begin position="19"/>
        <end position="22"/>
    </location>
</feature>
<feature type="splice variant" id="VSP_060468" description="In isoform a and isoform b." evidence="4">
    <location>
        <begin position="55"/>
        <end position="122"/>
    </location>
</feature>
<accession>Q09237</accession>
<accession>A0A2C9C305</accession>
<accession>A0A2C9C367</accession>
<accession>A0A2C9C3A1</accession>
<accession>A0A2C9C3E9</accession>
<accession>Q09482</accession>